<organism>
    <name type="scientific">Penicillium chrysogenum</name>
    <name type="common">Penicillium notatum</name>
    <dbReference type="NCBI Taxonomy" id="5076"/>
    <lineage>
        <taxon>Eukaryota</taxon>
        <taxon>Fungi</taxon>
        <taxon>Dikarya</taxon>
        <taxon>Ascomycota</taxon>
        <taxon>Pezizomycotina</taxon>
        <taxon>Eurotiomycetes</taxon>
        <taxon>Eurotiomycetidae</taxon>
        <taxon>Eurotiales</taxon>
        <taxon>Aspergillaceae</taxon>
        <taxon>Penicillium</taxon>
        <taxon>Penicillium chrysogenum species complex</taxon>
    </lineage>
</organism>
<evidence type="ECO:0000269" key="1">
    <source>
    </source>
</evidence>
<evidence type="ECO:0000269" key="2">
    <source>
    </source>
</evidence>
<evidence type="ECO:0000269" key="3">
    <source>
    </source>
</evidence>
<evidence type="ECO:0000269" key="4">
    <source>
    </source>
</evidence>
<evidence type="ECO:0000269" key="5">
    <source>
    </source>
</evidence>
<evidence type="ECO:0000269" key="6">
    <source>
    </source>
</evidence>
<evidence type="ECO:0000269" key="7">
    <source>
    </source>
</evidence>
<evidence type="ECO:0000269" key="8">
    <source>
    </source>
</evidence>
<evidence type="ECO:0000303" key="9">
    <source>
    </source>
</evidence>
<evidence type="ECO:0000303" key="10">
    <source>
    </source>
</evidence>
<evidence type="ECO:0000303" key="11">
    <source>
    </source>
</evidence>
<evidence type="ECO:0000305" key="12"/>
<evidence type="ECO:0000305" key="13">
    <source>
    </source>
</evidence>
<evidence type="ECO:0007744" key="14">
    <source>
        <dbReference type="PDB" id="2X1C"/>
    </source>
</evidence>
<evidence type="ECO:0007744" key="15">
    <source>
        <dbReference type="PDB" id="2X1D"/>
    </source>
</evidence>
<evidence type="ECO:0007744" key="16">
    <source>
        <dbReference type="PDB" id="2X1E"/>
    </source>
</evidence>
<evidence type="ECO:0007829" key="17">
    <source>
        <dbReference type="PDB" id="2X1D"/>
    </source>
</evidence>
<keyword id="KW-0002">3D-structure</keyword>
<keyword id="KW-0012">Acyltransferase</keyword>
<keyword id="KW-0045">Antibiotic biosynthesis</keyword>
<keyword id="KW-0903">Direct protein sequencing</keyword>
<keyword id="KW-0576">Peroxisome</keyword>
<keyword id="KW-0808">Transferase</keyword>
<keyword id="KW-0865">Zymogen</keyword>
<dbReference type="EC" id="2.3.1.164" evidence="1 4 5"/>
<dbReference type="EMBL" id="M31454">
    <property type="protein sequence ID" value="AAA33692.1"/>
    <property type="molecule type" value="Genomic_DNA"/>
</dbReference>
<dbReference type="EMBL" id="A15528">
    <property type="protein sequence ID" value="CAA01234.1"/>
    <property type="molecule type" value="Genomic_DNA"/>
</dbReference>
<dbReference type="EMBL" id="A15359">
    <property type="protein sequence ID" value="CAA01221.1"/>
    <property type="molecule type" value="Genomic_DNA"/>
</dbReference>
<dbReference type="PIR" id="JQ0118">
    <property type="entry name" value="JQ0118"/>
</dbReference>
<dbReference type="PDB" id="2X1C">
    <property type="method" value="X-ray"/>
    <property type="resolution" value="1.85 A"/>
    <property type="chains" value="A/B/C/D=1-357"/>
</dbReference>
<dbReference type="PDB" id="2X1D">
    <property type="method" value="X-ray"/>
    <property type="resolution" value="1.64 A"/>
    <property type="chains" value="A/B/C/D=1-357"/>
</dbReference>
<dbReference type="PDB" id="2X1E">
    <property type="method" value="X-ray"/>
    <property type="resolution" value="2.00 A"/>
    <property type="chains" value="A/B/C/D=1-357"/>
</dbReference>
<dbReference type="PDBsum" id="2X1C"/>
<dbReference type="PDBsum" id="2X1D"/>
<dbReference type="PDBsum" id="2X1E"/>
<dbReference type="SMR" id="P15802"/>
<dbReference type="MEROPS" id="C45.001"/>
<dbReference type="PhylomeDB" id="P15802"/>
<dbReference type="BioCyc" id="MetaCyc:MONOMER-13369"/>
<dbReference type="BRENDA" id="2.3.1.164">
    <property type="organism ID" value="4606"/>
</dbReference>
<dbReference type="UniPathway" id="UPA00149">
    <property type="reaction ID" value="UER00241"/>
</dbReference>
<dbReference type="EvolutionaryTrace" id="P15802"/>
<dbReference type="GO" id="GO:0005782">
    <property type="term" value="C:peroxisomal matrix"/>
    <property type="evidence" value="ECO:0000314"/>
    <property type="project" value="GO_Central"/>
</dbReference>
<dbReference type="GO" id="GO:0050640">
    <property type="term" value="F:isopenicillin-N N-acyltransferase activity"/>
    <property type="evidence" value="ECO:0000314"/>
    <property type="project" value="GO_Central"/>
</dbReference>
<dbReference type="GO" id="GO:0042318">
    <property type="term" value="P:penicillin biosynthetic process"/>
    <property type="evidence" value="ECO:0000314"/>
    <property type="project" value="GO_Central"/>
</dbReference>
<dbReference type="FunFam" id="1.10.10.2120:FF:000002">
    <property type="entry name" value="Acyl-coenzyme A:6-aminopenicillanic-acid-acyltransferase 40 kDa form"/>
    <property type="match status" value="1"/>
</dbReference>
<dbReference type="FunFam" id="3.60.60.10:FF:000010">
    <property type="entry name" value="Acyl-coenzyme A:6-aminopenicillanic-acid-acyltransferase 40 kDa form"/>
    <property type="match status" value="1"/>
</dbReference>
<dbReference type="Gene3D" id="1.10.10.2120">
    <property type="match status" value="1"/>
</dbReference>
<dbReference type="Gene3D" id="3.60.60.10">
    <property type="entry name" value="Penicillin V Acylase, Chain A"/>
    <property type="match status" value="1"/>
</dbReference>
<dbReference type="InterPro" id="IPR047794">
    <property type="entry name" value="C45_proenzyme-like"/>
</dbReference>
<dbReference type="InterPro" id="IPR047801">
    <property type="entry name" value="Peptidase_C45"/>
</dbReference>
<dbReference type="InterPro" id="IPR005079">
    <property type="entry name" value="Peptidase_C45_hydrolase"/>
</dbReference>
<dbReference type="NCBIfam" id="NF040521">
    <property type="entry name" value="C45_proenzyme"/>
    <property type="match status" value="1"/>
</dbReference>
<dbReference type="PANTHER" id="PTHR34180:SF1">
    <property type="entry name" value="BETA-ALANYL-DOPAMINE_CARCININE HYDROLASE"/>
    <property type="match status" value="1"/>
</dbReference>
<dbReference type="PANTHER" id="PTHR34180">
    <property type="entry name" value="PEPTIDASE C45"/>
    <property type="match status" value="1"/>
</dbReference>
<dbReference type="Pfam" id="PF03417">
    <property type="entry name" value="AAT"/>
    <property type="match status" value="1"/>
</dbReference>
<proteinExistence type="evidence at protein level"/>
<protein>
    <recommendedName>
        <fullName evidence="10">Isopenicillin-N N-acyltransferase</fullName>
        <shortName evidence="10">IAT</shortName>
        <shortName evidence="10">IPN acyltransferase</shortName>
        <ecNumber evidence="1 4 5">2.3.1.164</ecNumber>
    </recommendedName>
    <alternativeName>
        <fullName evidence="11">Acyl-coenzyme A:6-aminopenicillanic-acid-acyltransferase 40 kDa form</fullName>
    </alternativeName>
    <alternativeName>
        <fullName evidence="9">Penicillin biosynthetis cluster protein aatA</fullName>
    </alternativeName>
    <component>
        <recommendedName>
            <fullName evidence="11">Acyl-coenzyme A:6-aminopenicillanic acid acyltransferase 11 kDa subunit</fullName>
        </recommendedName>
    </component>
    <component>
        <recommendedName>
            <fullName evidence="11">Acyl-coenzyme A:6-aminopenicillanic acid acyltransferase 29 kDa subunit</fullName>
        </recommendedName>
    </component>
</protein>
<sequence length="357" mass="39939">MLHILCQGTPFEIGYEHGSAAKAVIARSIDFAVDLIRGKTKKTDEELKQVLSQLGRVIEERWPKYYEEIRGIAKGAERDVSEIVMLNTRTEFAYGLKAARDGCTTAYCQLPNGALQGQNWDFFSATKENLIRLTIRQAGLPTIKFITEAGIIGKVGFNSAGVAVNYNALHLQGLRPTGVPSHIALRIALESTSPSQAYDRIVEQGGMAASAFIMVGNGHEAFGLEFSPTSIRKQVLDANGRMVHTNHCLLQHGKNEKELDPLPDSWNRHQRMEFLLDGFDGTKQAFAQLWADEDNYPFSICRAYEEGKSRGATLFNIIYDHARREATVRLGRPTNPDEMFVMRFDEEDERSALNARL</sequence>
<name>AATA_PENCH</name>
<feature type="chain" id="PRO_0000020595" description="Isopenicillin-N N-acyltransferase">
    <location>
        <begin position="1"/>
        <end position="357"/>
    </location>
</feature>
<feature type="chain" id="PRO_0000020596" description="Acyl-coenzyme A:6-aminopenicillanic acid acyltransferase 11 kDa subunit">
    <location>
        <begin position="1"/>
        <end position="102"/>
    </location>
</feature>
<feature type="chain" id="PRO_0000020597" description="Acyl-coenzyme A:6-aminopenicillanic acid acyltransferase 29 kDa subunit">
    <location>
        <begin position="103"/>
        <end position="357"/>
    </location>
</feature>
<feature type="binding site" evidence="3 16">
    <location>
        <position position="121"/>
    </location>
    <ligand>
        <name>6-aminopenicillanate</name>
        <dbReference type="ChEBI" id="CHEBI:57869"/>
    </ligand>
</feature>
<feature type="binding site" evidence="3 16">
    <location>
        <position position="310"/>
    </location>
    <ligand>
        <name>6-aminopenicillanate</name>
        <dbReference type="ChEBI" id="CHEBI:57869"/>
    </ligand>
</feature>
<feature type="sequence conflict" description="In Ref. 3; AA sequence." evidence="12" ref="3">
    <original>C</original>
    <variation>W</variation>
    <location>
        <position position="103"/>
    </location>
</feature>
<feature type="sequence conflict" description="In Ref. 3; AA sequence." evidence="12" ref="3">
    <original>A</original>
    <variation>P</variation>
    <location>
        <position position="125"/>
    </location>
</feature>
<feature type="strand" evidence="17">
    <location>
        <begin position="3"/>
        <end position="9"/>
    </location>
</feature>
<feature type="helix" evidence="17">
    <location>
        <begin position="10"/>
        <end position="20"/>
    </location>
</feature>
<feature type="helix" evidence="17">
    <location>
        <begin position="22"/>
        <end position="37"/>
    </location>
</feature>
<feature type="helix" evidence="17">
    <location>
        <begin position="44"/>
        <end position="61"/>
    </location>
</feature>
<feature type="helix" evidence="17">
    <location>
        <begin position="63"/>
        <end position="76"/>
    </location>
</feature>
<feature type="helix" evidence="17">
    <location>
        <begin position="80"/>
        <end position="87"/>
    </location>
</feature>
<feature type="helix" evidence="17">
    <location>
        <begin position="89"/>
        <end position="100"/>
    </location>
</feature>
<feature type="strand" evidence="17">
    <location>
        <begin position="104"/>
        <end position="108"/>
    </location>
</feature>
<feature type="strand" evidence="17">
    <location>
        <begin position="115"/>
        <end position="122"/>
    </location>
</feature>
<feature type="helix" evidence="17">
    <location>
        <begin position="124"/>
        <end position="129"/>
    </location>
</feature>
<feature type="strand" evidence="17">
    <location>
        <begin position="130"/>
        <end position="136"/>
    </location>
</feature>
<feature type="strand" evidence="17">
    <location>
        <begin position="143"/>
        <end position="148"/>
    </location>
</feature>
<feature type="strand" evidence="17">
    <location>
        <begin position="155"/>
        <end position="158"/>
    </location>
</feature>
<feature type="strand" evidence="17">
    <location>
        <begin position="163"/>
        <end position="167"/>
    </location>
</feature>
<feature type="helix" evidence="17">
    <location>
        <begin position="181"/>
        <end position="189"/>
    </location>
</feature>
<feature type="helix" evidence="17">
    <location>
        <begin position="194"/>
        <end position="203"/>
    </location>
</feature>
<feature type="strand" evidence="17">
    <location>
        <begin position="206"/>
        <end position="209"/>
    </location>
</feature>
<feature type="strand" evidence="17">
    <location>
        <begin position="211"/>
        <end position="216"/>
    </location>
</feature>
<feature type="strand" evidence="17">
    <location>
        <begin position="221"/>
        <end position="227"/>
    </location>
</feature>
<feature type="strand" evidence="17">
    <location>
        <begin position="230"/>
        <end position="234"/>
    </location>
</feature>
<feature type="strand" evidence="17">
    <location>
        <begin position="240"/>
        <end position="244"/>
    </location>
</feature>
<feature type="helix" evidence="17">
    <location>
        <begin position="263"/>
        <end position="277"/>
    </location>
</feature>
<feature type="helix" evidence="17">
    <location>
        <begin position="283"/>
        <end position="289"/>
    </location>
</feature>
<feature type="turn" evidence="17">
    <location>
        <begin position="294"/>
        <end position="297"/>
    </location>
</feature>
<feature type="strand" evidence="17">
    <location>
        <begin position="298"/>
        <end position="301"/>
    </location>
</feature>
<feature type="turn" evidence="17">
    <location>
        <begin position="306"/>
        <end position="308"/>
    </location>
</feature>
<feature type="strand" evidence="17">
    <location>
        <begin position="312"/>
        <end position="320"/>
    </location>
</feature>
<feature type="turn" evidence="17">
    <location>
        <begin position="321"/>
        <end position="324"/>
    </location>
</feature>
<feature type="strand" evidence="17">
    <location>
        <begin position="325"/>
        <end position="331"/>
    </location>
</feature>
<feature type="strand" evidence="17">
    <location>
        <begin position="337"/>
        <end position="343"/>
    </location>
</feature>
<feature type="helix" evidence="17">
    <location>
        <begin position="346"/>
        <end position="353"/>
    </location>
</feature>
<gene>
    <name evidence="11" type="primary">aatA</name>
    <name evidence="10" type="synonym">penDE</name>
</gene>
<accession>P15802</accession>
<reference key="1">
    <citation type="journal article" date="1989" name="Gene">
        <title>Cloning and characterization of the acyl-coenzyme A: 6-aminopenicillanic-acid-acyltransferase gene of Penicillium chrysogenum.</title>
        <authorList>
            <person name="Barredo J.L."/>
            <person name="van Solingen P."/>
            <person name="Diez B."/>
            <person name="Alvarez E."/>
            <person name="Cantoral J.M."/>
            <person name="Kattevilder A."/>
            <person name="Smaal E.B."/>
            <person name="Groenen M.A.M."/>
            <person name="Veenstra A.E."/>
            <person name="Martin J.F."/>
        </authorList>
    </citation>
    <scope>NUCLEOTIDE SEQUENCE [GENOMIC DNA]</scope>
    <scope>PROTEIN SEQUENCE OF 1-31 AND 104-129</scope>
    <source>
        <strain>AS-P-78</strain>
    </source>
</reference>
<reference key="2">
    <citation type="journal article" date="1990" name="J. Bacteriol.">
        <title>Molecular characterization of the acyl-coenzyme A:isopenicillin N acyltransferase gene (penDE) from Penicillium chrysogenum and Aspergillus nidulans and activity of recombinant enzyme in Escherichia coli.</title>
        <authorList>
            <person name="Tobin M.B."/>
            <person name="Fleming M.D."/>
            <person name="Skatrud P.L."/>
            <person name="Miller J.R."/>
        </authorList>
    </citation>
    <scope>NUCLEOTIDE SEQUENCE [GENOMIC DNA]</scope>
    <scope>FUNCTION</scope>
    <scope>SUBUNIT</scope>
    <scope>CATALYTIC ACTIVITY</scope>
    <scope>PATHWAY</scope>
</reference>
<reference key="3">
    <citation type="journal article" date="1990" name="FEBS Lett.">
        <title>Acyl coenzyme A: 6-aminopenicillanic acid acyltransferase from Penicillium chrysogenum and Aspergillus nidulans.</title>
        <authorList>
            <person name="Whiteman P.A."/>
            <person name="Abraham E.P."/>
            <person name="Baldwin J.E."/>
            <person name="Fleming M.D."/>
            <person name="Schofield C.J."/>
            <person name="Sutherland J.D."/>
            <person name="Willis A.C."/>
        </authorList>
    </citation>
    <scope>PROTEIN SEQUENCE OF 1-20; 103-131; 188-200; 258-265 AND 316-323</scope>
    <scope>FUNCTION</scope>
    <scope>SUBUNIT</scope>
    <scope>CATALYTIC ACTIVITY</scope>
    <scope>PATHWAY</scope>
</reference>
<reference key="4">
    <citation type="journal article" date="1990" name="Biotechnology (N.Y.)">
        <title>Cloning and heterologous expression of the penicillin biosynthetic gene cluster from penicillum chrysogenum.</title>
        <authorList>
            <person name="Smith D.J."/>
            <person name="Burnham M.K."/>
            <person name="Edwards J."/>
            <person name="Earl A.J."/>
            <person name="Turner G."/>
        </authorList>
    </citation>
    <scope>FUNCTION</scope>
    <scope>CATALYTIC ACTIVITY</scope>
    <scope>PATHWAY</scope>
</reference>
<reference key="5">
    <citation type="journal article" date="1993" name="Biochem. J.">
        <title>Investigations into the post-translational modification and mechanism of isopenicillin N:acyl-CoA acyltransferase using electrospray mass spectrometry.</title>
        <authorList>
            <person name="Aplin R.T."/>
            <person name="Baldwin J.E."/>
            <person name="Roach P.L."/>
            <person name="Robinson C.V."/>
            <person name="Schofield C.J."/>
        </authorList>
    </citation>
    <scope>POST-TRANSLATIONAL CLEAVAGE</scope>
</reference>
<reference key="6">
    <citation type="journal article" date="2008" name="Fungal Genet. Biol.">
        <title>The unprocessed preprotein form IATC103S of the isopenicillin N acyltransferase is transported inside peroxisomes and regulates its self-processing.</title>
        <authorList>
            <person name="Garcia-Estrada C."/>
            <person name="Vaca I."/>
            <person name="Fierro F."/>
            <person name="Sjollema K."/>
            <person name="Veenhuis M."/>
            <person name="Martin J.F."/>
        </authorList>
    </citation>
    <scope>SELF-PROCESSING</scope>
    <scope>SUBCELLULAR LOCATION</scope>
</reference>
<reference key="7">
    <citation type="journal article" date="2012" name="Fungal Genet. Biol.">
        <title>The regulatory factor PcRFX1 controls the expression of the three genes of beta-lactam biosynthesis in Penicillium chrysogenum.</title>
        <authorList>
            <person name="Dominguez-Santos R."/>
            <person name="Martin J.F."/>
            <person name="Kosalkova K."/>
            <person name="Prieto C."/>
            <person name="Ullan R.V."/>
            <person name="Garcia-Estrada C."/>
        </authorList>
    </citation>
    <scope>INDUCTION</scope>
</reference>
<reference key="8">
    <citation type="journal article" date="2013" name="Appl. Microbiol. Biotechnol.">
        <title>The transport of phenylacetic acid across the peroxisomal membrane is mediated by the PaaT protein in Penicillium chrysogenum.</title>
        <authorList>
            <person name="Fernandez-Aguado M."/>
            <person name="Ullan R.V."/>
            <person name="Teijeira F."/>
            <person name="Rodriguez-Castro R."/>
            <person name="Martin J.F."/>
        </authorList>
    </citation>
    <scope>FUNCTION</scope>
</reference>
<reference evidence="14 15 16" key="9">
    <citation type="journal article" date="2010" name="Structure">
        <title>Structures of an isopenicillin N converting Ntn-hydrolase reveal different catalytic roles for the active site residues of precursor and mature enzyme.</title>
        <authorList>
            <person name="Bokhove M."/>
            <person name="Yoshida H."/>
            <person name="Hensgens C.M."/>
            <person name="van der Laan J.M."/>
            <person name="Sutherland J.D."/>
            <person name="Dijkstra B.W."/>
        </authorList>
    </citation>
    <scope>X-RAY CRYSTALLOGRAPHY (1.64 ANGSTROMS) IN COMPLEX WITH 6-AMINOPENICILLANIC ACID</scope>
    <scope>SELF-PROCESSING</scope>
</reference>
<comment type="function">
    <text evidence="1 4 5 7 13">Isopenicillin-N N-acyltransferase; part of the gene cluster that mediates the biosynthesis of penicillin, the world's most important antibiotic (PubMed:1368505, PubMed:2110531, PubMed:2120195). AatA catalyzes the exchange of the alpha-aminoadipyl side chain of isopenicillin N for phenylacetic acid to yield penicillin (PubMed:1368505, PubMed:2110531, PubMed:2120195). This step occurs in the peroxisomal matrix and the penM and paaT transporters are involved in the isopenicillin N and phenylacetic acid import into the peroxisome, respectively (PubMed:23053082). The penicillin biosynthesis occurs via 3 enzymatic steps, the first corresponding to the production of the tripeptide N-[(5S)-5-amino-5-carboxypentanoyl]-L-cysteinyl-D-valine (LLD-ACV or ACV) by the NRPS acvA. The tripeptide ACV is then cyclized to isopenicillin N (IPN) by the isopenicillin N synthase ipnA that forms the beta-lactam nucleus. Finally, the alpha-aminoadipyl side chain is exchanged for phenylacetic acid by the isopenicillin N acyltransferase aatA to yield penicillin in the peroxisomal matrix (Probable) (PubMed:1368505).</text>
</comment>
<comment type="catalytic activity">
    <reaction evidence="1 4 5">
        <text>isopenicillin N + phenylacetyl-CoA + H2O = penicillin G + L-2-aminoadipate + CoA + H(+)</text>
        <dbReference type="Rhea" id="RHEA:20720"/>
        <dbReference type="ChEBI" id="CHEBI:15377"/>
        <dbReference type="ChEBI" id="CHEBI:15378"/>
        <dbReference type="ChEBI" id="CHEBI:51354"/>
        <dbReference type="ChEBI" id="CHEBI:57287"/>
        <dbReference type="ChEBI" id="CHEBI:57390"/>
        <dbReference type="ChEBI" id="CHEBI:58399"/>
        <dbReference type="ChEBI" id="CHEBI:58672"/>
        <dbReference type="EC" id="2.3.1.164"/>
    </reaction>
    <physiologicalReaction direction="left-to-right" evidence="1 4 5">
        <dbReference type="Rhea" id="RHEA:20721"/>
    </physiologicalReaction>
</comment>
<comment type="pathway">
    <text evidence="1 4 5">Antibiotic biosynthesis; penicillin G biosynthesis; penicillin G from L-alpha-aminoadipate and L-cysteine and L-valine: step 3/3.</text>
</comment>
<comment type="subunit">
    <text evidence="4 5">The active form of the enzyme results from processing of the 40-kDa monomeric precursor to a heterodimer containing subunits of 11 and 29 kDa.</text>
</comment>
<comment type="subcellular location">
    <subcellularLocation>
        <location evidence="2">Peroxisome matrix</location>
    </subcellularLocation>
    <text evidence="2">The unprocessed preprotein is translocated inside peroxisomes and regulates its self-processing.</text>
</comment>
<comment type="induction">
    <text evidence="6">The transcription factor rfx1 controls penicillin biosynthesis through the regulation of the acvA, ipnA and aatA transcription.</text>
</comment>
<comment type="PTM">
    <text evidence="2 3 5 8">The pre-AAT protein is synthesized as 40 kDa precursor which is then self-processed into an 11 kDa (protein A) and a 29 kDa (protein B). The B protein carries AAT activity.</text>
</comment>
<comment type="similarity">
    <text evidence="12">Belongs to the peptidase C45 family.</text>
</comment>